<reference key="1">
    <citation type="journal article" date="2002" name="Nature">
        <title>Comparison of the genomes of two Xanthomonas pathogens with differing host specificities.</title>
        <authorList>
            <person name="da Silva A.C.R."/>
            <person name="Ferro J.A."/>
            <person name="Reinach F.C."/>
            <person name="Farah C.S."/>
            <person name="Furlan L.R."/>
            <person name="Quaggio R.B."/>
            <person name="Monteiro-Vitorello C.B."/>
            <person name="Van Sluys M.A."/>
            <person name="Almeida N.F. Jr."/>
            <person name="Alves L.M.C."/>
            <person name="do Amaral A.M."/>
            <person name="Bertolini M.C."/>
            <person name="Camargo L.E.A."/>
            <person name="Camarotte G."/>
            <person name="Cannavan F."/>
            <person name="Cardozo J."/>
            <person name="Chambergo F."/>
            <person name="Ciapina L.P."/>
            <person name="Cicarelli R.M.B."/>
            <person name="Coutinho L.L."/>
            <person name="Cursino-Santos J.R."/>
            <person name="El-Dorry H."/>
            <person name="Faria J.B."/>
            <person name="Ferreira A.J.S."/>
            <person name="Ferreira R.C.C."/>
            <person name="Ferro M.I.T."/>
            <person name="Formighieri E.F."/>
            <person name="Franco M.C."/>
            <person name="Greggio C.C."/>
            <person name="Gruber A."/>
            <person name="Katsuyama A.M."/>
            <person name="Kishi L.T."/>
            <person name="Leite R.P."/>
            <person name="Lemos E.G.M."/>
            <person name="Lemos M.V.F."/>
            <person name="Locali E.C."/>
            <person name="Machado M.A."/>
            <person name="Madeira A.M.B.N."/>
            <person name="Martinez-Rossi N.M."/>
            <person name="Martins E.C."/>
            <person name="Meidanis J."/>
            <person name="Menck C.F.M."/>
            <person name="Miyaki C.Y."/>
            <person name="Moon D.H."/>
            <person name="Moreira L.M."/>
            <person name="Novo M.T.M."/>
            <person name="Okura V.K."/>
            <person name="Oliveira M.C."/>
            <person name="Oliveira V.R."/>
            <person name="Pereira H.A."/>
            <person name="Rossi A."/>
            <person name="Sena J.A.D."/>
            <person name="Silva C."/>
            <person name="de Souza R.F."/>
            <person name="Spinola L.A.F."/>
            <person name="Takita M.A."/>
            <person name="Tamura R.E."/>
            <person name="Teixeira E.C."/>
            <person name="Tezza R.I.D."/>
            <person name="Trindade dos Santos M."/>
            <person name="Truffi D."/>
            <person name="Tsai S.M."/>
            <person name="White F.F."/>
            <person name="Setubal J.C."/>
            <person name="Kitajima J.P."/>
        </authorList>
    </citation>
    <scope>NUCLEOTIDE SEQUENCE [LARGE SCALE GENOMIC DNA]</scope>
    <source>
        <strain>306</strain>
    </source>
</reference>
<protein>
    <recommendedName>
        <fullName evidence="1">Transcription antitermination protein NusB</fullName>
    </recommendedName>
    <alternativeName>
        <fullName evidence="1">Antitermination factor NusB</fullName>
    </alternativeName>
</protein>
<keyword id="KW-0694">RNA-binding</keyword>
<keyword id="KW-0804">Transcription</keyword>
<keyword id="KW-0889">Transcription antitermination</keyword>
<keyword id="KW-0805">Transcription regulation</keyword>
<organism>
    <name type="scientific">Xanthomonas axonopodis pv. citri (strain 306)</name>
    <dbReference type="NCBI Taxonomy" id="190486"/>
    <lineage>
        <taxon>Bacteria</taxon>
        <taxon>Pseudomonadati</taxon>
        <taxon>Pseudomonadota</taxon>
        <taxon>Gammaproteobacteria</taxon>
        <taxon>Lysobacterales</taxon>
        <taxon>Lysobacteraceae</taxon>
        <taxon>Xanthomonas</taxon>
    </lineage>
</organism>
<gene>
    <name evidence="1" type="primary">nusB</name>
    <name type="ordered locus">XAC0751</name>
</gene>
<evidence type="ECO:0000255" key="1">
    <source>
        <dbReference type="HAMAP-Rule" id="MF_00073"/>
    </source>
</evidence>
<name>NUSB_XANAC</name>
<dbReference type="EMBL" id="AE008923">
    <property type="protein sequence ID" value="AAM35640.1"/>
    <property type="molecule type" value="Genomic_DNA"/>
</dbReference>
<dbReference type="RefSeq" id="WP_003490336.1">
    <property type="nucleotide sequence ID" value="NC_003919.1"/>
</dbReference>
<dbReference type="SMR" id="Q8PPD5"/>
<dbReference type="GeneID" id="97509136"/>
<dbReference type="KEGG" id="xac:XAC0751"/>
<dbReference type="eggNOG" id="COG0781">
    <property type="taxonomic scope" value="Bacteria"/>
</dbReference>
<dbReference type="HOGENOM" id="CLU_087843_4_1_6"/>
<dbReference type="Proteomes" id="UP000000576">
    <property type="component" value="Chromosome"/>
</dbReference>
<dbReference type="GO" id="GO:0005829">
    <property type="term" value="C:cytosol"/>
    <property type="evidence" value="ECO:0007669"/>
    <property type="project" value="TreeGrafter"/>
</dbReference>
<dbReference type="GO" id="GO:0003723">
    <property type="term" value="F:RNA binding"/>
    <property type="evidence" value="ECO:0007669"/>
    <property type="project" value="UniProtKB-UniRule"/>
</dbReference>
<dbReference type="GO" id="GO:0006353">
    <property type="term" value="P:DNA-templated transcription termination"/>
    <property type="evidence" value="ECO:0007669"/>
    <property type="project" value="UniProtKB-UniRule"/>
</dbReference>
<dbReference type="GO" id="GO:0031564">
    <property type="term" value="P:transcription antitermination"/>
    <property type="evidence" value="ECO:0007669"/>
    <property type="project" value="UniProtKB-KW"/>
</dbReference>
<dbReference type="FunFam" id="1.10.940.10:FF:000001">
    <property type="entry name" value="Transcription antitermination factor NusB"/>
    <property type="match status" value="1"/>
</dbReference>
<dbReference type="Gene3D" id="1.10.940.10">
    <property type="entry name" value="NusB-like"/>
    <property type="match status" value="1"/>
</dbReference>
<dbReference type="HAMAP" id="MF_00073">
    <property type="entry name" value="NusB"/>
    <property type="match status" value="1"/>
</dbReference>
<dbReference type="InterPro" id="IPR035926">
    <property type="entry name" value="NusB-like_sf"/>
</dbReference>
<dbReference type="InterPro" id="IPR011605">
    <property type="entry name" value="NusB_fam"/>
</dbReference>
<dbReference type="InterPro" id="IPR006027">
    <property type="entry name" value="NusB_RsmB_TIM44"/>
</dbReference>
<dbReference type="NCBIfam" id="TIGR01951">
    <property type="entry name" value="nusB"/>
    <property type="match status" value="1"/>
</dbReference>
<dbReference type="PANTHER" id="PTHR11078:SF3">
    <property type="entry name" value="ANTITERMINATION NUSB DOMAIN-CONTAINING PROTEIN"/>
    <property type="match status" value="1"/>
</dbReference>
<dbReference type="PANTHER" id="PTHR11078">
    <property type="entry name" value="N UTILIZATION SUBSTANCE PROTEIN B-RELATED"/>
    <property type="match status" value="1"/>
</dbReference>
<dbReference type="Pfam" id="PF01029">
    <property type="entry name" value="NusB"/>
    <property type="match status" value="1"/>
</dbReference>
<dbReference type="SUPFAM" id="SSF48013">
    <property type="entry name" value="NusB-like"/>
    <property type="match status" value="1"/>
</dbReference>
<proteinExistence type="inferred from homology"/>
<comment type="function">
    <text evidence="1">Involved in transcription antitermination. Required for transcription of ribosomal RNA (rRNA) genes. Binds specifically to the boxA antiterminator sequence of the ribosomal RNA (rrn) operons.</text>
</comment>
<comment type="similarity">
    <text evidence="1">Belongs to the NusB family.</text>
</comment>
<accession>Q8PPD5</accession>
<sequence length="159" mass="17758">MSKPGGHSRHGRRDGIDPVLRSRARRRALQAVYAWQISGGFAKQVIAQFAHEQAHEVADLAYFENLVEGVLSNRAELDTALTPYLDRSVEEVDAIERAVLRLAAYELLYRQDVPYRVVINEAIETAKRFGSEHGHTYVNGVLDRAAVEWRKVESGASGA</sequence>
<feature type="chain" id="PRO_0000176608" description="Transcription antitermination protein NusB">
    <location>
        <begin position="1"/>
        <end position="159"/>
    </location>
</feature>